<keyword id="KW-0028">Amino-acid biosynthesis</keyword>
<keyword id="KW-0963">Cytoplasm</keyword>
<keyword id="KW-0220">Diaminopimelate biosynthesis</keyword>
<keyword id="KW-0457">Lysine biosynthesis</keyword>
<keyword id="KW-0520">NAD</keyword>
<keyword id="KW-0521">NADP</keyword>
<keyword id="KW-0560">Oxidoreductase</keyword>
<name>DAPB_EDWI9</name>
<reference key="1">
    <citation type="submission" date="2009-03" db="EMBL/GenBank/DDBJ databases">
        <title>Complete genome sequence of Edwardsiella ictaluri 93-146.</title>
        <authorList>
            <person name="Williams M.L."/>
            <person name="Gillaspy A.F."/>
            <person name="Dyer D.W."/>
            <person name="Thune R.L."/>
            <person name="Waldbieser G.C."/>
            <person name="Schuster S.C."/>
            <person name="Gipson J."/>
            <person name="Zaitshik J."/>
            <person name="Landry C."/>
            <person name="Lawrence M.L."/>
        </authorList>
    </citation>
    <scope>NUCLEOTIDE SEQUENCE [LARGE SCALE GENOMIC DNA]</scope>
    <source>
        <strain>93-146</strain>
    </source>
</reference>
<evidence type="ECO:0000255" key="1">
    <source>
        <dbReference type="HAMAP-Rule" id="MF_00102"/>
    </source>
</evidence>
<evidence type="ECO:0000305" key="2"/>
<accession>C5B7N2</accession>
<sequence length="272" mass="28125">MAEQIRVAIAGAGGRMGRQLIAAAAAIPGVTLGAALEREGSGLLGCDAGELAGCGVTGVTVESSLERVAGQFDILIDFTRPEGTMAHLAFCQAHGKAMVIGTTGFSEQEKATIEAASQHVAIVLAANFSVGVNVMLRLLEKAAQVMGSYCDIEILEAHHRHKVDAPSGTALAMGEAIAGALGRSLESCAVYTRLGHTGERAPGSIGFATLRAGDIVGEHTAMFADVGERLEITHKASSRMTFASGAMRAAQWLGAQQPGMYDMCDVLALDTL</sequence>
<dbReference type="EC" id="1.17.1.8" evidence="1"/>
<dbReference type="EMBL" id="CP001600">
    <property type="protein sequence ID" value="ACR67909.1"/>
    <property type="molecule type" value="Genomic_DNA"/>
</dbReference>
<dbReference type="RefSeq" id="WP_015870102.1">
    <property type="nucleotide sequence ID" value="NZ_CP169062.1"/>
</dbReference>
<dbReference type="SMR" id="C5B7N2"/>
<dbReference type="STRING" id="67780.B6E78_14090"/>
<dbReference type="GeneID" id="69537753"/>
<dbReference type="KEGG" id="eic:NT01EI_0687"/>
<dbReference type="PATRIC" id="fig|634503.3.peg.619"/>
<dbReference type="HOGENOM" id="CLU_047479_2_1_6"/>
<dbReference type="OrthoDB" id="9790352at2"/>
<dbReference type="UniPathway" id="UPA00034">
    <property type="reaction ID" value="UER00018"/>
</dbReference>
<dbReference type="Proteomes" id="UP000001485">
    <property type="component" value="Chromosome"/>
</dbReference>
<dbReference type="GO" id="GO:0005829">
    <property type="term" value="C:cytosol"/>
    <property type="evidence" value="ECO:0007669"/>
    <property type="project" value="TreeGrafter"/>
</dbReference>
<dbReference type="GO" id="GO:0008839">
    <property type="term" value="F:4-hydroxy-tetrahydrodipicolinate reductase"/>
    <property type="evidence" value="ECO:0007669"/>
    <property type="project" value="UniProtKB-EC"/>
</dbReference>
<dbReference type="GO" id="GO:0051287">
    <property type="term" value="F:NAD binding"/>
    <property type="evidence" value="ECO:0007669"/>
    <property type="project" value="UniProtKB-UniRule"/>
</dbReference>
<dbReference type="GO" id="GO:0050661">
    <property type="term" value="F:NADP binding"/>
    <property type="evidence" value="ECO:0007669"/>
    <property type="project" value="UniProtKB-UniRule"/>
</dbReference>
<dbReference type="GO" id="GO:0016726">
    <property type="term" value="F:oxidoreductase activity, acting on CH or CH2 groups, NAD or NADP as acceptor"/>
    <property type="evidence" value="ECO:0007669"/>
    <property type="project" value="UniProtKB-UniRule"/>
</dbReference>
<dbReference type="GO" id="GO:0019877">
    <property type="term" value="P:diaminopimelate biosynthetic process"/>
    <property type="evidence" value="ECO:0007669"/>
    <property type="project" value="UniProtKB-UniRule"/>
</dbReference>
<dbReference type="GO" id="GO:0009089">
    <property type="term" value="P:lysine biosynthetic process via diaminopimelate"/>
    <property type="evidence" value="ECO:0007669"/>
    <property type="project" value="UniProtKB-UniRule"/>
</dbReference>
<dbReference type="CDD" id="cd02274">
    <property type="entry name" value="DHDPR_N"/>
    <property type="match status" value="1"/>
</dbReference>
<dbReference type="FunFam" id="3.30.360.10:FF:000004">
    <property type="entry name" value="4-hydroxy-tetrahydrodipicolinate reductase"/>
    <property type="match status" value="1"/>
</dbReference>
<dbReference type="FunFam" id="3.40.50.720:FF:000048">
    <property type="entry name" value="4-hydroxy-tetrahydrodipicolinate reductase"/>
    <property type="match status" value="1"/>
</dbReference>
<dbReference type="Gene3D" id="3.30.360.10">
    <property type="entry name" value="Dihydrodipicolinate Reductase, domain 2"/>
    <property type="match status" value="1"/>
</dbReference>
<dbReference type="Gene3D" id="3.40.50.720">
    <property type="entry name" value="NAD(P)-binding Rossmann-like Domain"/>
    <property type="match status" value="1"/>
</dbReference>
<dbReference type="HAMAP" id="MF_00102">
    <property type="entry name" value="DapB"/>
    <property type="match status" value="1"/>
</dbReference>
<dbReference type="InterPro" id="IPR022663">
    <property type="entry name" value="DapB_C"/>
</dbReference>
<dbReference type="InterPro" id="IPR000846">
    <property type="entry name" value="DapB_N"/>
</dbReference>
<dbReference type="InterPro" id="IPR022664">
    <property type="entry name" value="DapB_N_CS"/>
</dbReference>
<dbReference type="InterPro" id="IPR023940">
    <property type="entry name" value="DHDPR_bac"/>
</dbReference>
<dbReference type="InterPro" id="IPR036291">
    <property type="entry name" value="NAD(P)-bd_dom_sf"/>
</dbReference>
<dbReference type="NCBIfam" id="TIGR00036">
    <property type="entry name" value="dapB"/>
    <property type="match status" value="1"/>
</dbReference>
<dbReference type="PANTHER" id="PTHR20836:SF0">
    <property type="entry name" value="4-HYDROXY-TETRAHYDRODIPICOLINATE REDUCTASE 1, CHLOROPLASTIC-RELATED"/>
    <property type="match status" value="1"/>
</dbReference>
<dbReference type="PANTHER" id="PTHR20836">
    <property type="entry name" value="DIHYDRODIPICOLINATE REDUCTASE"/>
    <property type="match status" value="1"/>
</dbReference>
<dbReference type="Pfam" id="PF05173">
    <property type="entry name" value="DapB_C"/>
    <property type="match status" value="1"/>
</dbReference>
<dbReference type="Pfam" id="PF01113">
    <property type="entry name" value="DapB_N"/>
    <property type="match status" value="1"/>
</dbReference>
<dbReference type="PIRSF" id="PIRSF000161">
    <property type="entry name" value="DHPR"/>
    <property type="match status" value="1"/>
</dbReference>
<dbReference type="SUPFAM" id="SSF55347">
    <property type="entry name" value="Glyceraldehyde-3-phosphate dehydrogenase-like, C-terminal domain"/>
    <property type="match status" value="1"/>
</dbReference>
<dbReference type="SUPFAM" id="SSF51735">
    <property type="entry name" value="NAD(P)-binding Rossmann-fold domains"/>
    <property type="match status" value="1"/>
</dbReference>
<dbReference type="PROSITE" id="PS01298">
    <property type="entry name" value="DAPB"/>
    <property type="match status" value="1"/>
</dbReference>
<organism>
    <name type="scientific">Edwardsiella ictaluri (strain 93-146)</name>
    <dbReference type="NCBI Taxonomy" id="634503"/>
    <lineage>
        <taxon>Bacteria</taxon>
        <taxon>Pseudomonadati</taxon>
        <taxon>Pseudomonadota</taxon>
        <taxon>Gammaproteobacteria</taxon>
        <taxon>Enterobacterales</taxon>
        <taxon>Hafniaceae</taxon>
        <taxon>Edwardsiella</taxon>
    </lineage>
</organism>
<gene>
    <name evidence="1" type="primary">dapB</name>
    <name type="ordered locus">NT01EI_0687</name>
</gene>
<proteinExistence type="inferred from homology"/>
<protein>
    <recommendedName>
        <fullName evidence="1">4-hydroxy-tetrahydrodipicolinate reductase</fullName>
        <shortName evidence="1">HTPA reductase</shortName>
        <ecNumber evidence="1">1.17.1.8</ecNumber>
    </recommendedName>
</protein>
<feature type="chain" id="PRO_1000202811" description="4-hydroxy-tetrahydrodipicolinate reductase">
    <location>
        <begin position="1"/>
        <end position="272"/>
    </location>
</feature>
<feature type="active site" description="Proton donor/acceptor" evidence="1">
    <location>
        <position position="158"/>
    </location>
</feature>
<feature type="active site" description="Proton donor" evidence="1">
    <location>
        <position position="162"/>
    </location>
</feature>
<feature type="binding site" evidence="1">
    <location>
        <begin position="11"/>
        <end position="16"/>
    </location>
    <ligand>
        <name>NAD(+)</name>
        <dbReference type="ChEBI" id="CHEBI:57540"/>
    </ligand>
</feature>
<feature type="binding site" evidence="1">
    <location>
        <position position="37"/>
    </location>
    <ligand>
        <name>NAD(+)</name>
        <dbReference type="ChEBI" id="CHEBI:57540"/>
    </ligand>
</feature>
<feature type="binding site" evidence="1">
    <location>
        <position position="38"/>
    </location>
    <ligand>
        <name>NADP(+)</name>
        <dbReference type="ChEBI" id="CHEBI:58349"/>
    </ligand>
</feature>
<feature type="binding site" evidence="1">
    <location>
        <begin position="101"/>
        <end position="103"/>
    </location>
    <ligand>
        <name>NAD(+)</name>
        <dbReference type="ChEBI" id="CHEBI:57540"/>
    </ligand>
</feature>
<feature type="binding site" evidence="1">
    <location>
        <begin position="125"/>
        <end position="128"/>
    </location>
    <ligand>
        <name>NAD(+)</name>
        <dbReference type="ChEBI" id="CHEBI:57540"/>
    </ligand>
</feature>
<feature type="binding site" evidence="1">
    <location>
        <position position="159"/>
    </location>
    <ligand>
        <name>(S)-2,3,4,5-tetrahydrodipicolinate</name>
        <dbReference type="ChEBI" id="CHEBI:16845"/>
    </ligand>
</feature>
<feature type="binding site" evidence="1">
    <location>
        <begin position="168"/>
        <end position="169"/>
    </location>
    <ligand>
        <name>(S)-2,3,4,5-tetrahydrodipicolinate</name>
        <dbReference type="ChEBI" id="CHEBI:16845"/>
    </ligand>
</feature>
<comment type="function">
    <text evidence="1">Catalyzes the conversion of 4-hydroxy-tetrahydrodipicolinate (HTPA) to tetrahydrodipicolinate.</text>
</comment>
<comment type="catalytic activity">
    <reaction evidence="1">
        <text>(S)-2,3,4,5-tetrahydrodipicolinate + NAD(+) + H2O = (2S,4S)-4-hydroxy-2,3,4,5-tetrahydrodipicolinate + NADH + H(+)</text>
        <dbReference type="Rhea" id="RHEA:35323"/>
        <dbReference type="ChEBI" id="CHEBI:15377"/>
        <dbReference type="ChEBI" id="CHEBI:15378"/>
        <dbReference type="ChEBI" id="CHEBI:16845"/>
        <dbReference type="ChEBI" id="CHEBI:57540"/>
        <dbReference type="ChEBI" id="CHEBI:57945"/>
        <dbReference type="ChEBI" id="CHEBI:67139"/>
        <dbReference type="EC" id="1.17.1.8"/>
    </reaction>
</comment>
<comment type="catalytic activity">
    <reaction evidence="1">
        <text>(S)-2,3,4,5-tetrahydrodipicolinate + NADP(+) + H2O = (2S,4S)-4-hydroxy-2,3,4,5-tetrahydrodipicolinate + NADPH + H(+)</text>
        <dbReference type="Rhea" id="RHEA:35331"/>
        <dbReference type="ChEBI" id="CHEBI:15377"/>
        <dbReference type="ChEBI" id="CHEBI:15378"/>
        <dbReference type="ChEBI" id="CHEBI:16845"/>
        <dbReference type="ChEBI" id="CHEBI:57783"/>
        <dbReference type="ChEBI" id="CHEBI:58349"/>
        <dbReference type="ChEBI" id="CHEBI:67139"/>
        <dbReference type="EC" id="1.17.1.8"/>
    </reaction>
</comment>
<comment type="pathway">
    <text evidence="1">Amino-acid biosynthesis; L-lysine biosynthesis via DAP pathway; (S)-tetrahydrodipicolinate from L-aspartate: step 4/4.</text>
</comment>
<comment type="subunit">
    <text evidence="1">Homotetramer.</text>
</comment>
<comment type="subcellular location">
    <subcellularLocation>
        <location evidence="1">Cytoplasm</location>
    </subcellularLocation>
</comment>
<comment type="similarity">
    <text evidence="1">Belongs to the DapB family.</text>
</comment>
<comment type="caution">
    <text evidence="2">Was originally thought to be a dihydrodipicolinate reductase (DHDPR), catalyzing the conversion of dihydrodipicolinate to tetrahydrodipicolinate. However, it was shown in E.coli that the substrate of the enzymatic reaction is not dihydrodipicolinate (DHDP) but in fact (2S,4S)-4-hydroxy-2,3,4,5-tetrahydrodipicolinic acid (HTPA), the product released by the DapA-catalyzed reaction.</text>
</comment>